<proteinExistence type="evidence at protein level"/>
<dbReference type="EC" id="1.1.3.15" evidence="5"/>
<dbReference type="EMBL" id="NCVQ01000008">
    <property type="protein sequence ID" value="PWZ13502.1"/>
    <property type="molecule type" value="Genomic_DNA"/>
</dbReference>
<dbReference type="EMBL" id="BT064071">
    <property type="protein sequence ID" value="ACN28768.1"/>
    <property type="molecule type" value="mRNA"/>
</dbReference>
<dbReference type="RefSeq" id="NP_001146005.1">
    <property type="nucleotide sequence ID" value="NM_001152533.1"/>
</dbReference>
<dbReference type="RefSeq" id="XP_008651329.1">
    <property type="nucleotide sequence ID" value="XM_008653107.1"/>
</dbReference>
<dbReference type="SMR" id="A0A3L6E0R4"/>
<dbReference type="FunCoup" id="A0A3L6E0R4">
    <property type="interactions" value="1907"/>
</dbReference>
<dbReference type="GeneID" id="100279535"/>
<dbReference type="KEGG" id="zma:100279535"/>
<dbReference type="HOGENOM" id="CLU_020639_0_0_1"/>
<dbReference type="InParanoid" id="A0A3L6E0R4"/>
<dbReference type="OrthoDB" id="25826at2759"/>
<dbReference type="UniPathway" id="UPA00951">
    <property type="reaction ID" value="UER00912"/>
</dbReference>
<dbReference type="Proteomes" id="UP000007305">
    <property type="component" value="Unplaced"/>
</dbReference>
<dbReference type="Proteomes" id="UP000251960">
    <property type="component" value="Chromosome 7"/>
</dbReference>
<dbReference type="ExpressionAtlas" id="A0A3L6E0R4">
    <property type="expression patterns" value="baseline and differential"/>
</dbReference>
<dbReference type="GO" id="GO:0005777">
    <property type="term" value="C:peroxisome"/>
    <property type="evidence" value="ECO:0000318"/>
    <property type="project" value="GO_Central"/>
</dbReference>
<dbReference type="GO" id="GO:0003973">
    <property type="term" value="F:(S)-2-hydroxy-acid oxidase activity"/>
    <property type="evidence" value="ECO:0000318"/>
    <property type="project" value="GO_Central"/>
</dbReference>
<dbReference type="GO" id="GO:0010181">
    <property type="term" value="F:FMN binding"/>
    <property type="evidence" value="ECO:0007669"/>
    <property type="project" value="InterPro"/>
</dbReference>
<dbReference type="GO" id="GO:0009854">
    <property type="term" value="P:oxidative photosynthetic carbon pathway"/>
    <property type="evidence" value="ECO:0007669"/>
    <property type="project" value="UniProtKB-KW"/>
</dbReference>
<dbReference type="GO" id="GO:0051707">
    <property type="term" value="P:response to other organism"/>
    <property type="evidence" value="ECO:0007669"/>
    <property type="project" value="UniProtKB-ARBA"/>
</dbReference>
<dbReference type="CDD" id="cd02809">
    <property type="entry name" value="alpha_hydroxyacid_oxid_FMN"/>
    <property type="match status" value="1"/>
</dbReference>
<dbReference type="FunFam" id="3.20.20.70:FF:000063">
    <property type="entry name" value="peroxisomal (S)-2-hydroxy-acid oxidase GLO1"/>
    <property type="match status" value="1"/>
</dbReference>
<dbReference type="Gene3D" id="3.20.20.70">
    <property type="entry name" value="Aldolase class I"/>
    <property type="match status" value="1"/>
</dbReference>
<dbReference type="InterPro" id="IPR013785">
    <property type="entry name" value="Aldolase_TIM"/>
</dbReference>
<dbReference type="InterPro" id="IPR012133">
    <property type="entry name" value="Alpha-hydoxy_acid_DH_FMN"/>
</dbReference>
<dbReference type="InterPro" id="IPR000262">
    <property type="entry name" value="FMN-dep_DH"/>
</dbReference>
<dbReference type="InterPro" id="IPR037396">
    <property type="entry name" value="FMN_HAD"/>
</dbReference>
<dbReference type="InterPro" id="IPR008259">
    <property type="entry name" value="FMN_hydac_DH_AS"/>
</dbReference>
<dbReference type="PANTHER" id="PTHR10578:SF107">
    <property type="entry name" value="2-HYDROXYACID OXIDASE 1"/>
    <property type="match status" value="1"/>
</dbReference>
<dbReference type="PANTHER" id="PTHR10578">
    <property type="entry name" value="S -2-HYDROXY-ACID OXIDASE-RELATED"/>
    <property type="match status" value="1"/>
</dbReference>
<dbReference type="Pfam" id="PF01070">
    <property type="entry name" value="FMN_dh"/>
    <property type="match status" value="1"/>
</dbReference>
<dbReference type="PIRSF" id="PIRSF000138">
    <property type="entry name" value="Al-hdrx_acd_dh"/>
    <property type="match status" value="1"/>
</dbReference>
<dbReference type="SMART" id="SM01240">
    <property type="entry name" value="IMPDH"/>
    <property type="match status" value="1"/>
</dbReference>
<dbReference type="SUPFAM" id="SSF51395">
    <property type="entry name" value="FMN-linked oxidoreductases"/>
    <property type="match status" value="1"/>
</dbReference>
<dbReference type="PROSITE" id="PS00557">
    <property type="entry name" value="FMN_HYDROXY_ACID_DH_1"/>
    <property type="match status" value="1"/>
</dbReference>
<dbReference type="PROSITE" id="PS51349">
    <property type="entry name" value="FMN_HYDROXY_ACID_DH_2"/>
    <property type="match status" value="1"/>
</dbReference>
<name>GOX1_MAIZE</name>
<sequence length="369" mass="40095">MGEITNVMEYQAIAKQKLPKMAYDYYASGAEDEWTLQENREAFSRILFRPRILIDVSKIDMTTTVLGFKISMPIMVAPTAMQKMAHPDGEYATARAAAAAGTIMTLSSWATSSVEEVASTGPGIRFFQLYVYKDRKVVEQLVRRAERAGFKAIALTVDTPRLGRREADIKNRFVLPPHLTLKNFEGLDLGKMDQAADSGLASYVAGQVDRTLSWKDVKWLQTITTLPILVKGVLTAEDTRLAVANGAAGIIVSNHGARQLDYVPATISALEEVVKAARGQLPVFVDGGVRRGTDVFKALALGAAGVFVGRPVVFSLAAAGEAGVSNVLRMLRDEFELTMALSGCTSLAEITRKHIITESDKLSAIPSRL</sequence>
<feature type="chain" id="PRO_0000454911" description="Glycolate oxidase 1">
    <location>
        <begin position="1"/>
        <end position="369"/>
    </location>
</feature>
<feature type="domain" description="FMN hydroxy acid dehydrogenase" evidence="3">
    <location>
        <begin position="1"/>
        <end position="360"/>
    </location>
</feature>
<feature type="active site" description="Proton acceptor" evidence="10">
    <location>
        <position position="255"/>
    </location>
</feature>
<feature type="binding site" evidence="2">
    <location>
        <position position="25"/>
    </location>
    <ligand>
        <name>glyoxylate</name>
        <dbReference type="ChEBI" id="CHEBI:36655"/>
    </ligand>
</feature>
<feature type="binding site" evidence="1">
    <location>
        <begin position="78"/>
        <end position="80"/>
    </location>
    <ligand>
        <name>FMN</name>
        <dbReference type="ChEBI" id="CHEBI:58210"/>
    </ligand>
</feature>
<feature type="binding site" evidence="1">
    <location>
        <position position="107"/>
    </location>
    <ligand>
        <name>FMN</name>
        <dbReference type="ChEBI" id="CHEBI:58210"/>
    </ligand>
</feature>
<feature type="binding site" evidence="1">
    <location>
        <begin position="128"/>
        <end position="130"/>
    </location>
    <ligand>
        <name>FMN</name>
        <dbReference type="ChEBI" id="CHEBI:58210"/>
    </ligand>
</feature>
<feature type="binding site" evidence="2">
    <location>
        <position position="130"/>
    </location>
    <ligand>
        <name>glyoxylate</name>
        <dbReference type="ChEBI" id="CHEBI:36655"/>
    </ligand>
</feature>
<feature type="binding site" evidence="1">
    <location>
        <position position="156"/>
    </location>
    <ligand>
        <name>FMN</name>
        <dbReference type="ChEBI" id="CHEBI:58210"/>
    </ligand>
</feature>
<feature type="binding site" evidence="2">
    <location>
        <position position="165"/>
    </location>
    <ligand>
        <name>glyoxylate</name>
        <dbReference type="ChEBI" id="CHEBI:36655"/>
    </ligand>
</feature>
<feature type="binding site" evidence="1">
    <location>
        <position position="231"/>
    </location>
    <ligand>
        <name>FMN</name>
        <dbReference type="ChEBI" id="CHEBI:58210"/>
    </ligand>
</feature>
<feature type="binding site" evidence="1">
    <location>
        <position position="253"/>
    </location>
    <ligand>
        <name>FMN</name>
        <dbReference type="ChEBI" id="CHEBI:58210"/>
    </ligand>
</feature>
<feature type="binding site" evidence="2">
    <location>
        <position position="255"/>
    </location>
    <ligand>
        <name>glyoxylate</name>
        <dbReference type="ChEBI" id="CHEBI:36655"/>
    </ligand>
</feature>
<feature type="binding site" evidence="2">
    <location>
        <position position="258"/>
    </location>
    <ligand>
        <name>glyoxylate</name>
        <dbReference type="ChEBI" id="CHEBI:36655"/>
    </ligand>
</feature>
<feature type="binding site" evidence="1">
    <location>
        <begin position="286"/>
        <end position="290"/>
    </location>
    <ligand>
        <name>FMN</name>
        <dbReference type="ChEBI" id="CHEBI:58210"/>
    </ligand>
</feature>
<feature type="binding site" evidence="1">
    <location>
        <begin position="309"/>
        <end position="310"/>
    </location>
    <ligand>
        <name>FMN</name>
        <dbReference type="ChEBI" id="CHEBI:58210"/>
    </ligand>
</feature>
<feature type="site" description="Involved in determining the substrate specificity of glycolate oxidase" evidence="1">
    <location>
        <position position="109"/>
    </location>
</feature>
<feature type="sequence conflict" description="In Ref. 2; ACN28768." evidence="8" ref="2">
    <original>Y</original>
    <variation>N</variation>
    <location>
        <position position="91"/>
    </location>
</feature>
<evidence type="ECO:0000250" key="1">
    <source>
        <dbReference type="UniProtKB" id="P05414"/>
    </source>
</evidence>
<evidence type="ECO:0000250" key="2">
    <source>
        <dbReference type="UniProtKB" id="Q9UJM8"/>
    </source>
</evidence>
<evidence type="ECO:0000255" key="3">
    <source>
        <dbReference type="PROSITE-ProRule" id="PRU00683"/>
    </source>
</evidence>
<evidence type="ECO:0000269" key="4">
    <source>
    </source>
</evidence>
<evidence type="ECO:0000269" key="5">
    <source>
    </source>
</evidence>
<evidence type="ECO:0000303" key="6">
    <source>
    </source>
</evidence>
<evidence type="ECO:0000303" key="7">
    <source>
    </source>
</evidence>
<evidence type="ECO:0000305" key="8"/>
<evidence type="ECO:0000305" key="9">
    <source>
    </source>
</evidence>
<evidence type="ECO:0000305" key="10">
    <source>
    </source>
</evidence>
<evidence type="ECO:0000312" key="11">
    <source>
        <dbReference type="EMBL" id="PWZ13502.1"/>
    </source>
</evidence>
<keyword id="KW-0285">Flavoprotein</keyword>
<keyword id="KW-0288">FMN</keyword>
<keyword id="KW-0323">Glycolate pathway</keyword>
<keyword id="KW-0560">Oxidoreductase</keyword>
<keyword id="KW-0576">Peroxisome</keyword>
<keyword id="KW-0601">Photorespiration</keyword>
<keyword id="KW-1185">Reference proteome</keyword>
<organism>
    <name type="scientific">Zea mays</name>
    <name type="common">Maize</name>
    <dbReference type="NCBI Taxonomy" id="4577"/>
    <lineage>
        <taxon>Eukaryota</taxon>
        <taxon>Viridiplantae</taxon>
        <taxon>Streptophyta</taxon>
        <taxon>Embryophyta</taxon>
        <taxon>Tracheophyta</taxon>
        <taxon>Spermatophyta</taxon>
        <taxon>Magnoliopsida</taxon>
        <taxon>Liliopsida</taxon>
        <taxon>Poales</taxon>
        <taxon>Poaceae</taxon>
        <taxon>PACMAD clade</taxon>
        <taxon>Panicoideae</taxon>
        <taxon>Andropogonodae</taxon>
        <taxon>Andropogoneae</taxon>
        <taxon>Tripsacinae</taxon>
        <taxon>Zea</taxon>
    </lineage>
</organism>
<reference key="1">
    <citation type="journal article" date="2018" name="Nat. Genet.">
        <title>Extensive intraspecific gene order and gene structural variations between Mo17 and other maize genomes.</title>
        <authorList>
            <person name="Sun S."/>
            <person name="Zhou Y."/>
            <person name="Chen J."/>
            <person name="Shi J."/>
            <person name="Zhao H."/>
            <person name="Zhao H."/>
            <person name="Song W."/>
            <person name="Zhang M."/>
            <person name="Cui Y."/>
            <person name="Dong X."/>
            <person name="Liu H."/>
            <person name="Ma X."/>
            <person name="Jiao Y."/>
            <person name="Wang B."/>
            <person name="Wei X."/>
            <person name="Stein J.C."/>
            <person name="Glaubitz J.C."/>
            <person name="Lu F."/>
            <person name="Yu G."/>
            <person name="Liang C."/>
            <person name="Fengler K."/>
            <person name="Li B."/>
            <person name="Rafalski A."/>
            <person name="Schnable P.S."/>
            <person name="Ware D.H."/>
            <person name="Buckler E.S."/>
            <person name="Lai J."/>
        </authorList>
    </citation>
    <scope>NUCLEOTIDE SEQUENCE [LARGE SCALE GENOMIC DNA]</scope>
    <source>
        <strain>cv. Missouri 17</strain>
        <tissue>Seedling</tissue>
    </source>
</reference>
<reference key="2">
    <citation type="journal article" date="2009" name="PLoS Genet.">
        <title>Sequencing, mapping, and analysis of 27,455 maize full-length cDNAs.</title>
        <authorList>
            <person name="Soderlund C."/>
            <person name="Descour A."/>
            <person name="Kudrna D."/>
            <person name="Bomhoff M."/>
            <person name="Boyd L."/>
            <person name="Currie J."/>
            <person name="Angelova A."/>
            <person name="Collura K."/>
            <person name="Wissotski M."/>
            <person name="Ashley E."/>
            <person name="Morrow D."/>
            <person name="Fernandes J."/>
            <person name="Walbot V."/>
            <person name="Yu Y."/>
        </authorList>
    </citation>
    <scope>NUCLEOTIDE SEQUENCE [LARGE SCALE MRNA]</scope>
    <source>
        <strain>cv. B73</strain>
    </source>
</reference>
<reference key="3">
    <citation type="journal article" date="2009" name="Plant Physiol.">
        <title>High glycolate oxidase activity is required for survival of maize in normal air.</title>
        <authorList>
            <person name="Zelitch I."/>
            <person name="Schultes N.P."/>
            <person name="Peterson R.B."/>
            <person name="Brown P."/>
            <person name="Brutnell T.P."/>
        </authorList>
    </citation>
    <scope>FUNCTION</scope>
    <scope>DISRUPTION PHENOTYPE</scope>
    <scope>PATHWAY</scope>
    <scope>SUBCELLULAR LOCATION</scope>
</reference>
<reference key="4">
    <citation type="journal article" date="2015" name="J. Biol. Chem.">
        <title>Experimental evidence for a hydride transfer mechanism in plant glycolate oxidase catalysis.</title>
        <authorList>
            <person name="Dellero Y."/>
            <person name="Mauve C."/>
            <person name="Boex-Fontvieille E."/>
            <person name="Flesch V."/>
            <person name="Jossier M."/>
            <person name="Tcherkez G."/>
            <person name="Hodges M."/>
        </authorList>
    </citation>
    <scope>FUNCTION</scope>
    <scope>CATALYTIC ACTIVITY</scope>
    <scope>BIOPHYSICOCHEMICAL PROPERTIES</scope>
    <scope>REACTION MECHANISM</scope>
    <scope>ACTIVE SITE</scope>
</reference>
<comment type="function">
    <text evidence="4 5">Catalyzes the oxidation of glycolate to glyoxylate, with a reduction of O2 to H2O2 (PubMed:25416784). Is an essential enzyme in photorespiration in plants (PubMed:18805949). Photorespiration plays a vital role in C4 photosynthesis in Z.mays and is essential for maize seedling development and maintaining low (non-toxic) levels of glycolate (PubMed:18805949).</text>
</comment>
<comment type="catalytic activity">
    <reaction evidence="5">
        <text>glycolate + O2 = glyoxylate + H2O2</text>
        <dbReference type="Rhea" id="RHEA:25311"/>
        <dbReference type="ChEBI" id="CHEBI:15379"/>
        <dbReference type="ChEBI" id="CHEBI:16240"/>
        <dbReference type="ChEBI" id="CHEBI:29805"/>
        <dbReference type="ChEBI" id="CHEBI:36655"/>
        <dbReference type="EC" id="1.1.3.15"/>
    </reaction>
    <physiologicalReaction direction="left-to-right" evidence="10">
        <dbReference type="Rhea" id="RHEA:25312"/>
    </physiologicalReaction>
</comment>
<comment type="cofactor">
    <cofactor evidence="1">
        <name>FMN</name>
        <dbReference type="ChEBI" id="CHEBI:58210"/>
    </cofactor>
    <text evidence="1">Binds 1 FMN per subunit.</text>
</comment>
<comment type="biophysicochemical properties">
    <kinetics>
        <KM evidence="5">0.22 mM for glycolate (at pH 8 and 30 degrees Celsius)</KM>
        <text evidence="5">kcat is 34.13 sec(-1) (at pH 8 and 30 degrees Celsius).</text>
    </kinetics>
</comment>
<comment type="pathway">
    <text evidence="4">Photosynthesis; photorespiration; glycine from 2-phosphoglycolate: step 2/3.</text>
</comment>
<comment type="subunit">
    <text evidence="1">Homotetramer.</text>
</comment>
<comment type="subcellular location">
    <subcellularLocation>
        <location evidence="9">Peroxisome</location>
    </subcellularLocation>
</comment>
<comment type="disruption phenotype">
    <text evidence="4">The mutant shows deficiency in glycolate oxidase activity and is non-viable in air; leaves become necrotic within 7 days and plants die within 15 days. When the mutant cells are shifted from high CO2 to air in light, they accumulate glycolate linearly for 6 hours to levels 7-fold higher than wild type and 11-fold higher after 25 hours.</text>
</comment>
<comment type="similarity">
    <text evidence="8">Belongs to the FMN-dependent alpha-hydroxy acid dehydrogenase family.</text>
</comment>
<accession>A0A3L6E0R4</accession>
<accession>C0P702</accession>
<protein>
    <recommendedName>
        <fullName evidence="6 7">Glycolate oxidase 1</fullName>
        <shortName evidence="7">GOX</shortName>
        <ecNumber evidence="5">1.1.3.15</ecNumber>
    </recommendedName>
</protein>
<gene>
    <name evidence="6 7" type="primary">GO1</name>
    <name evidence="11" type="ORF">Zm00014a_001774</name>
</gene>